<comment type="function">
    <text evidence="1">Required for H(+) efflux immediately after light irradiation to form a rapid H(+) concentration gradient across the thylakoid membranes. Together with PxcL, contributes to transient H(+) uptake following dark to light transition.</text>
</comment>
<comment type="subcellular location">
    <subcellularLocation>
        <location evidence="1">Cell inner membrane</location>
        <topology evidence="1">Multi-pass membrane protein</topology>
    </subcellularLocation>
</comment>
<comment type="similarity">
    <text evidence="1">Belongs to the CemA family.</text>
</comment>
<evidence type="ECO:0000255" key="1">
    <source>
        <dbReference type="HAMAP-Rule" id="MF_01308"/>
    </source>
</evidence>
<accession>Q3AXS7</accession>
<keyword id="KW-0997">Cell inner membrane</keyword>
<keyword id="KW-1003">Cell membrane</keyword>
<keyword id="KW-0375">Hydrogen ion transport</keyword>
<keyword id="KW-0406">Ion transport</keyword>
<keyword id="KW-0472">Membrane</keyword>
<keyword id="KW-1185">Reference proteome</keyword>
<keyword id="KW-0812">Transmembrane</keyword>
<keyword id="KW-1133">Transmembrane helix</keyword>
<keyword id="KW-0813">Transport</keyword>
<organism>
    <name type="scientific">Synechococcus sp. (strain CC9902)</name>
    <dbReference type="NCBI Taxonomy" id="316279"/>
    <lineage>
        <taxon>Bacteria</taxon>
        <taxon>Bacillati</taxon>
        <taxon>Cyanobacteriota</taxon>
        <taxon>Cyanophyceae</taxon>
        <taxon>Synechococcales</taxon>
        <taxon>Synechococcaceae</taxon>
        <taxon>Synechococcus</taxon>
    </lineage>
</organism>
<name>PXCA_SYNS9</name>
<protein>
    <recommendedName>
        <fullName evidence="1">Proton extrusion protein PxcA</fullName>
    </recommendedName>
</protein>
<gene>
    <name evidence="1" type="primary">pxcA</name>
    <name type="ordered locus">Syncc9902_1145</name>
</gene>
<reference key="1">
    <citation type="submission" date="2005-08" db="EMBL/GenBank/DDBJ databases">
        <title>Complete sequence of Synechococcus sp. CC9902.</title>
        <authorList>
            <person name="Copeland A."/>
            <person name="Lucas S."/>
            <person name="Lapidus A."/>
            <person name="Barry K."/>
            <person name="Detter J.C."/>
            <person name="Glavina T."/>
            <person name="Hammon N."/>
            <person name="Israni S."/>
            <person name="Pitluck S."/>
            <person name="Martinez M."/>
            <person name="Schmutz J."/>
            <person name="Larimer F."/>
            <person name="Land M."/>
            <person name="Kyrpides N."/>
            <person name="Ivanova N."/>
            <person name="Richardson P."/>
        </authorList>
    </citation>
    <scope>NUCLEOTIDE SEQUENCE [LARGE SCALE GENOMIC DNA]</scope>
    <source>
        <strain>CC9902</strain>
    </source>
</reference>
<sequence length="383" mass="43102">MSRRNWVNFFSRGQGFDLTNDLERGYESALLIQNLELEFYGDRLVRSDVELGVPKSVQASILRRFRAALLICRTTLESVERNRGQFDLQELRQLQLIEAVVSRYGYQLPSGGSPAISRAPEALPRSLLGFFDTVRRQLDPASEETVVAGFRRRRNSTLISLRILLLLILVPLLIQQVAGAYIISPAVDRLSPELPFLSYPKPKLEEQAVEKLRVYKQELEFDALLNSDQPLEADQLRQKLAEKAIELKDEADGLSVQAVKNVFSDLSALIAFTVVCFASRDDLRVMRGFFDEAVYGLSDSAKAFAIILFTDIFVGFHSPEGWTVLLNGIAKHLGLPSQENFVMLFIATFPVILATIFKYWIFRYLNRVSPSSVATLKGMNGSG</sequence>
<feature type="chain" id="PRO_0000293501" description="Proton extrusion protein PxcA">
    <location>
        <begin position="1"/>
        <end position="383"/>
    </location>
</feature>
<feature type="transmembrane region" description="Helical" evidence="1">
    <location>
        <begin position="163"/>
        <end position="183"/>
    </location>
</feature>
<feature type="transmembrane region" description="Helical" evidence="1">
    <location>
        <begin position="258"/>
        <end position="278"/>
    </location>
</feature>
<feature type="transmembrane region" description="Helical" evidence="1">
    <location>
        <begin position="306"/>
        <end position="326"/>
    </location>
</feature>
<feature type="transmembrane region" description="Helical" evidence="1">
    <location>
        <begin position="341"/>
        <end position="361"/>
    </location>
</feature>
<dbReference type="EMBL" id="CP000097">
    <property type="protein sequence ID" value="ABB26109.1"/>
    <property type="molecule type" value="Genomic_DNA"/>
</dbReference>
<dbReference type="RefSeq" id="WP_011359936.1">
    <property type="nucleotide sequence ID" value="NC_007513.1"/>
</dbReference>
<dbReference type="SMR" id="Q3AXS7"/>
<dbReference type="STRING" id="316279.Syncc9902_1145"/>
<dbReference type="KEGG" id="sye:Syncc9902_1145"/>
<dbReference type="eggNOG" id="ENOG502Z8DN">
    <property type="taxonomic scope" value="Bacteria"/>
</dbReference>
<dbReference type="HOGENOM" id="CLU_690401_0_0_3"/>
<dbReference type="OrthoDB" id="418298at2"/>
<dbReference type="Proteomes" id="UP000002712">
    <property type="component" value="Chromosome"/>
</dbReference>
<dbReference type="GO" id="GO:0005886">
    <property type="term" value="C:plasma membrane"/>
    <property type="evidence" value="ECO:0007669"/>
    <property type="project" value="UniProtKB-SubCell"/>
</dbReference>
<dbReference type="GO" id="GO:0015078">
    <property type="term" value="F:proton transmembrane transporter activity"/>
    <property type="evidence" value="ECO:0007669"/>
    <property type="project" value="UniProtKB-UniRule"/>
</dbReference>
<dbReference type="HAMAP" id="MF_01308">
    <property type="entry name" value="CemA_PxcA"/>
    <property type="match status" value="1"/>
</dbReference>
<dbReference type="InterPro" id="IPR004282">
    <property type="entry name" value="CemA"/>
</dbReference>
<dbReference type="NCBIfam" id="NF002705">
    <property type="entry name" value="PRK02507.1-4"/>
    <property type="match status" value="1"/>
</dbReference>
<dbReference type="PANTHER" id="PTHR33650:SF2">
    <property type="entry name" value="CHLOROPLAST ENVELOPE MEMBRANE PROTEIN"/>
    <property type="match status" value="1"/>
</dbReference>
<dbReference type="PANTHER" id="PTHR33650">
    <property type="entry name" value="CHLOROPLAST ENVELOPE MEMBRANE PROTEIN-RELATED"/>
    <property type="match status" value="1"/>
</dbReference>
<dbReference type="Pfam" id="PF03040">
    <property type="entry name" value="CemA"/>
    <property type="match status" value="1"/>
</dbReference>
<proteinExistence type="inferred from homology"/>